<accession>Q8PUP4</accession>
<name>RLME_METMA</name>
<protein>
    <recommendedName>
        <fullName evidence="1">Ribosomal RNA large subunit methyltransferase E</fullName>
        <ecNumber evidence="1">2.1.1.166</ecNumber>
    </recommendedName>
    <alternativeName>
        <fullName evidence="1">23S rRNA Um2552 methyltransferase</fullName>
    </alternativeName>
    <alternativeName>
        <fullName evidence="1">rRNA (uridine-2'-O-)-methyltransferase</fullName>
    </alternativeName>
</protein>
<reference key="1">
    <citation type="journal article" date="2002" name="J. Mol. Microbiol. Biotechnol.">
        <title>The genome of Methanosarcina mazei: evidence for lateral gene transfer between Bacteria and Archaea.</title>
        <authorList>
            <person name="Deppenmeier U."/>
            <person name="Johann A."/>
            <person name="Hartsch T."/>
            <person name="Merkl R."/>
            <person name="Schmitz R.A."/>
            <person name="Martinez-Arias R."/>
            <person name="Henne A."/>
            <person name="Wiezer A."/>
            <person name="Baeumer S."/>
            <person name="Jacobi C."/>
            <person name="Brueggemann H."/>
            <person name="Lienard T."/>
            <person name="Christmann A."/>
            <person name="Boemecke M."/>
            <person name="Steckel S."/>
            <person name="Bhattacharyya A."/>
            <person name="Lykidis A."/>
            <person name="Overbeek R."/>
            <person name="Klenk H.-P."/>
            <person name="Gunsalus R.P."/>
            <person name="Fritz H.-J."/>
            <person name="Gottschalk G."/>
        </authorList>
    </citation>
    <scope>NUCLEOTIDE SEQUENCE [LARGE SCALE GENOMIC DNA]</scope>
    <source>
        <strain>ATCC BAA-159 / DSM 3647 / Goe1 / Go1 / JCM 11833 / OCM 88</strain>
    </source>
</reference>
<evidence type="ECO:0000255" key="1">
    <source>
        <dbReference type="HAMAP-Rule" id="MF_01547"/>
    </source>
</evidence>
<proteinExistence type="inferred from homology"/>
<dbReference type="EC" id="2.1.1.166" evidence="1"/>
<dbReference type="EMBL" id="AE008384">
    <property type="protein sequence ID" value="AAM31984.1"/>
    <property type="molecule type" value="Genomic_DNA"/>
</dbReference>
<dbReference type="RefSeq" id="WP_011034213.1">
    <property type="nucleotide sequence ID" value="NC_003901.1"/>
</dbReference>
<dbReference type="SMR" id="Q8PUP4"/>
<dbReference type="KEGG" id="mma:MM_2288"/>
<dbReference type="PATRIC" id="fig|192952.21.peg.2622"/>
<dbReference type="eggNOG" id="arCOG00079">
    <property type="taxonomic scope" value="Archaea"/>
</dbReference>
<dbReference type="HOGENOM" id="CLU_009422_4_4_2"/>
<dbReference type="Proteomes" id="UP000000595">
    <property type="component" value="Chromosome"/>
</dbReference>
<dbReference type="GO" id="GO:0005737">
    <property type="term" value="C:cytoplasm"/>
    <property type="evidence" value="ECO:0007669"/>
    <property type="project" value="UniProtKB-SubCell"/>
</dbReference>
<dbReference type="GO" id="GO:0008650">
    <property type="term" value="F:rRNA (uridine-2'-O-)-methyltransferase activity"/>
    <property type="evidence" value="ECO:0007669"/>
    <property type="project" value="UniProtKB-UniRule"/>
</dbReference>
<dbReference type="Gene3D" id="2.40.50.140">
    <property type="entry name" value="Nucleic acid-binding proteins"/>
    <property type="match status" value="1"/>
</dbReference>
<dbReference type="Gene3D" id="3.40.50.150">
    <property type="entry name" value="Vaccinia Virus protein VP39"/>
    <property type="match status" value="1"/>
</dbReference>
<dbReference type="HAMAP" id="MF_01547">
    <property type="entry name" value="RNA_methyltr_E"/>
    <property type="match status" value="1"/>
</dbReference>
<dbReference type="InterPro" id="IPR012340">
    <property type="entry name" value="NA-bd_OB-fold"/>
</dbReference>
<dbReference type="InterPro" id="IPR050082">
    <property type="entry name" value="RNA_methyltr_RlmE"/>
</dbReference>
<dbReference type="InterPro" id="IPR002877">
    <property type="entry name" value="RNA_MeTrfase_FtsJ_dom"/>
</dbReference>
<dbReference type="InterPro" id="IPR015507">
    <property type="entry name" value="rRNA-MeTfrase_E"/>
</dbReference>
<dbReference type="InterPro" id="IPR029063">
    <property type="entry name" value="SAM-dependent_MTases_sf"/>
</dbReference>
<dbReference type="InterPro" id="IPR002792">
    <property type="entry name" value="TRAM_dom"/>
</dbReference>
<dbReference type="PANTHER" id="PTHR10920:SF13">
    <property type="entry name" value="PRE-RRNA 2'-O-RIBOSE RNA METHYLTRANSFERASE FTSJ3"/>
    <property type="match status" value="1"/>
</dbReference>
<dbReference type="PANTHER" id="PTHR10920">
    <property type="entry name" value="RIBOSOMAL RNA METHYLTRANSFERASE"/>
    <property type="match status" value="1"/>
</dbReference>
<dbReference type="Pfam" id="PF01728">
    <property type="entry name" value="FtsJ"/>
    <property type="match status" value="1"/>
</dbReference>
<dbReference type="Pfam" id="PF01938">
    <property type="entry name" value="TRAM"/>
    <property type="match status" value="1"/>
</dbReference>
<dbReference type="SUPFAM" id="SSF50249">
    <property type="entry name" value="Nucleic acid-binding proteins"/>
    <property type="match status" value="1"/>
</dbReference>
<dbReference type="SUPFAM" id="SSF53335">
    <property type="entry name" value="S-adenosyl-L-methionine-dependent methyltransferases"/>
    <property type="match status" value="1"/>
</dbReference>
<dbReference type="PROSITE" id="PS50926">
    <property type="entry name" value="TRAM"/>
    <property type="match status" value="1"/>
</dbReference>
<keyword id="KW-0963">Cytoplasm</keyword>
<keyword id="KW-0489">Methyltransferase</keyword>
<keyword id="KW-0698">rRNA processing</keyword>
<keyword id="KW-0949">S-adenosyl-L-methionine</keyword>
<keyword id="KW-0808">Transferase</keyword>
<feature type="chain" id="PRO_0000155570" description="Ribosomal RNA large subunit methyltransferase E">
    <location>
        <begin position="1"/>
        <end position="268"/>
    </location>
</feature>
<feature type="domain" description="TRAM" evidence="1">
    <location>
        <begin position="196"/>
        <end position="254"/>
    </location>
</feature>
<feature type="active site" description="Proton acceptor" evidence="1">
    <location>
        <position position="149"/>
    </location>
</feature>
<feature type="binding site" evidence="1">
    <location>
        <position position="50"/>
    </location>
    <ligand>
        <name>S-adenosyl-L-methionine</name>
        <dbReference type="ChEBI" id="CHEBI:59789"/>
    </ligand>
</feature>
<feature type="binding site" evidence="1">
    <location>
        <position position="52"/>
    </location>
    <ligand>
        <name>S-adenosyl-L-methionine</name>
        <dbReference type="ChEBI" id="CHEBI:59789"/>
    </ligand>
</feature>
<feature type="binding site" evidence="1">
    <location>
        <position position="68"/>
    </location>
    <ligand>
        <name>S-adenosyl-L-methionine</name>
        <dbReference type="ChEBI" id="CHEBI:59789"/>
    </ligand>
</feature>
<feature type="binding site" evidence="1">
    <location>
        <position position="84"/>
    </location>
    <ligand>
        <name>S-adenosyl-L-methionine</name>
        <dbReference type="ChEBI" id="CHEBI:59789"/>
    </ligand>
</feature>
<feature type="binding site" evidence="1">
    <location>
        <position position="109"/>
    </location>
    <ligand>
        <name>S-adenosyl-L-methionine</name>
        <dbReference type="ChEBI" id="CHEBI:59789"/>
    </ligand>
</feature>
<sequence length="268" mass="29744">MARDRRDYYYHQAKEEGYRSRASFKLKQINEKHNVIKRGDSVVDLGAAPGGWLQVAKQLSGGKVLGVDLQRIDPIEGVETIQGDINAESTIKKIIKIVGEKGADVVLCDAAPNLSGNWSYDHARSIELATSALECAKKILKPKGNFAVKVFQGDMFNDYLDEVRNNFVRVKAYSPQASRSQSAEIYIIGKKFLTAPLRKGDKFVVDIEKLGSSGDGAVLIEGFVVFVKEVEVGEKVRIKISDVKPNFAFADVEERIESSETENREKSD</sequence>
<organism>
    <name type="scientific">Methanosarcina mazei (strain ATCC BAA-159 / DSM 3647 / Goe1 / Go1 / JCM 11833 / OCM 88)</name>
    <name type="common">Methanosarcina frisia</name>
    <dbReference type="NCBI Taxonomy" id="192952"/>
    <lineage>
        <taxon>Archaea</taxon>
        <taxon>Methanobacteriati</taxon>
        <taxon>Methanobacteriota</taxon>
        <taxon>Stenosarchaea group</taxon>
        <taxon>Methanomicrobia</taxon>
        <taxon>Methanosarcinales</taxon>
        <taxon>Methanosarcinaceae</taxon>
        <taxon>Methanosarcina</taxon>
    </lineage>
</organism>
<comment type="function">
    <text evidence="1">Specifically methylates the uridine in position 2552 of 23S rRNA at the 2'-O position of the ribose in the fully assembled 50S ribosomal subunit.</text>
</comment>
<comment type="catalytic activity">
    <reaction evidence="1">
        <text>uridine(2552) in 23S rRNA + S-adenosyl-L-methionine = 2'-O-methyluridine(2552) in 23S rRNA + S-adenosyl-L-homocysteine + H(+)</text>
        <dbReference type="Rhea" id="RHEA:42720"/>
        <dbReference type="Rhea" id="RHEA-COMP:10202"/>
        <dbReference type="Rhea" id="RHEA-COMP:10203"/>
        <dbReference type="ChEBI" id="CHEBI:15378"/>
        <dbReference type="ChEBI" id="CHEBI:57856"/>
        <dbReference type="ChEBI" id="CHEBI:59789"/>
        <dbReference type="ChEBI" id="CHEBI:65315"/>
        <dbReference type="ChEBI" id="CHEBI:74478"/>
        <dbReference type="EC" id="2.1.1.166"/>
    </reaction>
</comment>
<comment type="subcellular location">
    <subcellularLocation>
        <location evidence="1">Cytoplasm</location>
    </subcellularLocation>
</comment>
<comment type="similarity">
    <text evidence="1">Belongs to the class I-like SAM-binding methyltransferase superfamily. RNA methyltransferase RlmE family.</text>
</comment>
<gene>
    <name evidence="1" type="primary">rlmE</name>
    <name evidence="1" type="synonym">rrmJ</name>
    <name type="ordered locus">MM_2288</name>
</gene>